<keyword id="KW-0227">DNA damage</keyword>
<keyword id="KW-0233">DNA recombination</keyword>
<keyword id="KW-0234">DNA repair</keyword>
<keyword id="KW-0479">Metal-binding</keyword>
<keyword id="KW-1185">Reference proteome</keyword>
<keyword id="KW-0862">Zinc</keyword>
<keyword id="KW-0863">Zinc-finger</keyword>
<feature type="chain" id="PRO_1000089731" description="Recombination protein RecR">
    <location>
        <begin position="1"/>
        <end position="197"/>
    </location>
</feature>
<feature type="domain" description="Toprim" evidence="1">
    <location>
        <begin position="79"/>
        <end position="174"/>
    </location>
</feature>
<feature type="zinc finger region" description="C4-type" evidence="1">
    <location>
        <begin position="57"/>
        <end position="72"/>
    </location>
</feature>
<gene>
    <name evidence="1" type="primary">recR</name>
    <name type="ordered locus">Gbem_0210</name>
</gene>
<organism>
    <name type="scientific">Citrifermentans bemidjiense (strain ATCC BAA-1014 / DSM 16622 / JCM 12645 / Bem)</name>
    <name type="common">Geobacter bemidjiensis</name>
    <dbReference type="NCBI Taxonomy" id="404380"/>
    <lineage>
        <taxon>Bacteria</taxon>
        <taxon>Pseudomonadati</taxon>
        <taxon>Thermodesulfobacteriota</taxon>
        <taxon>Desulfuromonadia</taxon>
        <taxon>Geobacterales</taxon>
        <taxon>Geobacteraceae</taxon>
        <taxon>Citrifermentans</taxon>
    </lineage>
</organism>
<accession>B5E9A4</accession>
<comment type="function">
    <text evidence="1">May play a role in DNA repair. It seems to be involved in an RecBC-independent recombinational process of DNA repair. It may act with RecF and RecO.</text>
</comment>
<comment type="similarity">
    <text evidence="1">Belongs to the RecR family.</text>
</comment>
<protein>
    <recommendedName>
        <fullName evidence="1">Recombination protein RecR</fullName>
    </recommendedName>
</protein>
<sequence length="197" mass="21525">MLHFSGSLTRLVGELKKLPGVGEKSAQRLAFHLLKHPSNIEALAQSLLQVGERVHLCSVCFAITEDDPCWICSGERDSGTICVVEEPQDLLALERSRAFSGRYHVLQGALSPLNGVTPKDLRIAELMQRLQGGEVREVLIATNFTVEGEATALYLTRLIKPLSIKVTRLAHGIPVGSDLEYVDAATVQRAVEGRSEL</sequence>
<dbReference type="EMBL" id="CP001124">
    <property type="protein sequence ID" value="ACH37241.1"/>
    <property type="molecule type" value="Genomic_DNA"/>
</dbReference>
<dbReference type="RefSeq" id="WP_012528649.1">
    <property type="nucleotide sequence ID" value="NC_011146.1"/>
</dbReference>
<dbReference type="SMR" id="B5E9A4"/>
<dbReference type="STRING" id="404380.Gbem_0210"/>
<dbReference type="KEGG" id="gbm:Gbem_0210"/>
<dbReference type="eggNOG" id="COG0353">
    <property type="taxonomic scope" value="Bacteria"/>
</dbReference>
<dbReference type="HOGENOM" id="CLU_060739_1_0_7"/>
<dbReference type="OrthoDB" id="9802672at2"/>
<dbReference type="Proteomes" id="UP000008825">
    <property type="component" value="Chromosome"/>
</dbReference>
<dbReference type="GO" id="GO:0003677">
    <property type="term" value="F:DNA binding"/>
    <property type="evidence" value="ECO:0007669"/>
    <property type="project" value="UniProtKB-UniRule"/>
</dbReference>
<dbReference type="GO" id="GO:0008270">
    <property type="term" value="F:zinc ion binding"/>
    <property type="evidence" value="ECO:0007669"/>
    <property type="project" value="UniProtKB-KW"/>
</dbReference>
<dbReference type="GO" id="GO:0006310">
    <property type="term" value="P:DNA recombination"/>
    <property type="evidence" value="ECO:0007669"/>
    <property type="project" value="UniProtKB-UniRule"/>
</dbReference>
<dbReference type="GO" id="GO:0006281">
    <property type="term" value="P:DNA repair"/>
    <property type="evidence" value="ECO:0007669"/>
    <property type="project" value="UniProtKB-UniRule"/>
</dbReference>
<dbReference type="CDD" id="cd01025">
    <property type="entry name" value="TOPRIM_recR"/>
    <property type="match status" value="1"/>
</dbReference>
<dbReference type="Gene3D" id="3.30.60.80">
    <property type="match status" value="1"/>
</dbReference>
<dbReference type="Gene3D" id="3.40.1360.10">
    <property type="match status" value="1"/>
</dbReference>
<dbReference type="Gene3D" id="6.10.250.240">
    <property type="match status" value="1"/>
</dbReference>
<dbReference type="Gene3D" id="1.10.8.420">
    <property type="entry name" value="RecR Domain 1"/>
    <property type="match status" value="1"/>
</dbReference>
<dbReference type="HAMAP" id="MF_00017">
    <property type="entry name" value="RecR"/>
    <property type="match status" value="1"/>
</dbReference>
<dbReference type="InterPro" id="IPR000093">
    <property type="entry name" value="DNA_Rcmb_RecR"/>
</dbReference>
<dbReference type="InterPro" id="IPR003583">
    <property type="entry name" value="Hlx-hairpin-Hlx_DNA-bd_motif"/>
</dbReference>
<dbReference type="InterPro" id="IPR023627">
    <property type="entry name" value="Rcmb_RecR"/>
</dbReference>
<dbReference type="InterPro" id="IPR015967">
    <property type="entry name" value="Rcmb_RecR_Znf"/>
</dbReference>
<dbReference type="InterPro" id="IPR006171">
    <property type="entry name" value="TOPRIM_dom"/>
</dbReference>
<dbReference type="InterPro" id="IPR034137">
    <property type="entry name" value="TOPRIM_RecR"/>
</dbReference>
<dbReference type="NCBIfam" id="TIGR00615">
    <property type="entry name" value="recR"/>
    <property type="match status" value="1"/>
</dbReference>
<dbReference type="PANTHER" id="PTHR30446">
    <property type="entry name" value="RECOMBINATION PROTEIN RECR"/>
    <property type="match status" value="1"/>
</dbReference>
<dbReference type="PANTHER" id="PTHR30446:SF0">
    <property type="entry name" value="RECOMBINATION PROTEIN RECR"/>
    <property type="match status" value="1"/>
</dbReference>
<dbReference type="Pfam" id="PF21175">
    <property type="entry name" value="RecR_C"/>
    <property type="match status" value="1"/>
</dbReference>
<dbReference type="Pfam" id="PF21176">
    <property type="entry name" value="RecR_HhH"/>
    <property type="match status" value="1"/>
</dbReference>
<dbReference type="Pfam" id="PF02132">
    <property type="entry name" value="RecR_ZnF"/>
    <property type="match status" value="1"/>
</dbReference>
<dbReference type="Pfam" id="PF13662">
    <property type="entry name" value="Toprim_4"/>
    <property type="match status" value="1"/>
</dbReference>
<dbReference type="SMART" id="SM00278">
    <property type="entry name" value="HhH1"/>
    <property type="match status" value="1"/>
</dbReference>
<dbReference type="SMART" id="SM00493">
    <property type="entry name" value="TOPRIM"/>
    <property type="match status" value="1"/>
</dbReference>
<dbReference type="SUPFAM" id="SSF111304">
    <property type="entry name" value="Recombination protein RecR"/>
    <property type="match status" value="1"/>
</dbReference>
<dbReference type="PROSITE" id="PS01300">
    <property type="entry name" value="RECR"/>
    <property type="match status" value="1"/>
</dbReference>
<dbReference type="PROSITE" id="PS50880">
    <property type="entry name" value="TOPRIM"/>
    <property type="match status" value="1"/>
</dbReference>
<reference key="1">
    <citation type="submission" date="2008-07" db="EMBL/GenBank/DDBJ databases">
        <title>Complete sequence of Geobacter bemidjiensis BEM.</title>
        <authorList>
            <consortium name="US DOE Joint Genome Institute"/>
            <person name="Lucas S."/>
            <person name="Copeland A."/>
            <person name="Lapidus A."/>
            <person name="Glavina del Rio T."/>
            <person name="Dalin E."/>
            <person name="Tice H."/>
            <person name="Bruce D."/>
            <person name="Goodwin L."/>
            <person name="Pitluck S."/>
            <person name="Kiss H."/>
            <person name="Brettin T."/>
            <person name="Detter J.C."/>
            <person name="Han C."/>
            <person name="Kuske C.R."/>
            <person name="Schmutz J."/>
            <person name="Larimer F."/>
            <person name="Land M."/>
            <person name="Hauser L."/>
            <person name="Kyrpides N."/>
            <person name="Lykidis A."/>
            <person name="Lovley D."/>
            <person name="Richardson P."/>
        </authorList>
    </citation>
    <scope>NUCLEOTIDE SEQUENCE [LARGE SCALE GENOMIC DNA]</scope>
    <source>
        <strain>ATCC BAA-1014 / DSM 16622 / JCM 12645 / Bem</strain>
    </source>
</reference>
<name>RECR_CITBB</name>
<evidence type="ECO:0000255" key="1">
    <source>
        <dbReference type="HAMAP-Rule" id="MF_00017"/>
    </source>
</evidence>
<proteinExistence type="inferred from homology"/>